<proteinExistence type="inferred from homology"/>
<organism>
    <name type="scientific">Rickettsia prowazekii (strain Madrid E)</name>
    <dbReference type="NCBI Taxonomy" id="272947"/>
    <lineage>
        <taxon>Bacteria</taxon>
        <taxon>Pseudomonadati</taxon>
        <taxon>Pseudomonadota</taxon>
        <taxon>Alphaproteobacteria</taxon>
        <taxon>Rickettsiales</taxon>
        <taxon>Rickettsiaceae</taxon>
        <taxon>Rickettsieae</taxon>
        <taxon>Rickettsia</taxon>
        <taxon>typhus group</taxon>
    </lineage>
</organism>
<evidence type="ECO:0000250" key="1">
    <source>
        <dbReference type="UniProtKB" id="P72793"/>
    </source>
</evidence>
<evidence type="ECO:0000255" key="2"/>
<evidence type="ECO:0000255" key="3">
    <source>
        <dbReference type="HAMAP-Rule" id="MF_02239"/>
    </source>
</evidence>
<evidence type="ECO:0000305" key="4"/>
<keyword id="KW-1003">Cell membrane</keyword>
<keyword id="KW-0349">Heme</keyword>
<keyword id="KW-0408">Iron</keyword>
<keyword id="KW-0472">Membrane</keyword>
<keyword id="KW-0479">Metal-binding</keyword>
<keyword id="KW-0560">Oxidoreductase</keyword>
<keyword id="KW-1185">Reference proteome</keyword>
<keyword id="KW-0812">Transmembrane</keyword>
<keyword id="KW-1133">Transmembrane helix</keyword>
<comment type="function">
    <text evidence="1">Catalyzes the oxidation of protoporphyrinogen IX to protoporphyrin IX. Is involved in the biosynthesis of tetrapyrrole molecules like heme. Does not use oxygen or artificial electron acceptors such as menadione or benzoquinone.</text>
</comment>
<comment type="catalytic activity">
    <reaction evidence="1">
        <text>protoporphyrinogen IX + 3 A = protoporphyrin IX + 3 AH2</text>
        <dbReference type="Rhea" id="RHEA:62000"/>
        <dbReference type="ChEBI" id="CHEBI:13193"/>
        <dbReference type="ChEBI" id="CHEBI:17499"/>
        <dbReference type="ChEBI" id="CHEBI:57306"/>
        <dbReference type="ChEBI" id="CHEBI:57307"/>
    </reaction>
</comment>
<comment type="cofactor">
    <cofactor evidence="1">
        <name>heme b</name>
        <dbReference type="ChEBI" id="CHEBI:60344"/>
    </cofactor>
    <text evidence="1">Binds 1 heme b (iron(II)-protoporphyrin IX) group per subunit.</text>
</comment>
<comment type="pathway">
    <text evidence="1">Porphyrin-containing compound metabolism; protoporphyrin-IX biosynthesis; protoporphyrin-IX from protoporphyrinogen-IX: step 1/1.</text>
</comment>
<comment type="subunit">
    <text evidence="1">Homodimer.</text>
</comment>
<comment type="subcellular location">
    <subcellularLocation>
        <location evidence="1">Cell membrane</location>
        <topology evidence="2">Multi-pass membrane protein</topology>
    </subcellularLocation>
</comment>
<comment type="similarity">
    <text evidence="3 4">Belongs to the HemJ family.</text>
</comment>
<dbReference type="EC" id="1.3.99.-" evidence="1"/>
<dbReference type="EMBL" id="AJ235273">
    <property type="protein sequence ID" value="CAA15305.1"/>
    <property type="molecule type" value="Genomic_DNA"/>
</dbReference>
<dbReference type="PIR" id="A71651">
    <property type="entry name" value="A71651"/>
</dbReference>
<dbReference type="RefSeq" id="NP_221229.1">
    <property type="nucleotide sequence ID" value="NC_000963.1"/>
</dbReference>
<dbReference type="STRING" id="272947.gene:17555952"/>
<dbReference type="EnsemblBacteria" id="CAA15305">
    <property type="protein sequence ID" value="CAA15305"/>
    <property type="gene ID" value="CAA15305"/>
</dbReference>
<dbReference type="KEGG" id="rpr:RP883"/>
<dbReference type="PATRIC" id="fig|272947.5.peg.923"/>
<dbReference type="eggNOG" id="COG1981">
    <property type="taxonomic scope" value="Bacteria"/>
</dbReference>
<dbReference type="HOGENOM" id="CLU_125006_1_0_5"/>
<dbReference type="OrthoDB" id="9800824at2"/>
<dbReference type="UniPathway" id="UPA00251">
    <property type="reaction ID" value="UER00324"/>
</dbReference>
<dbReference type="Proteomes" id="UP000002480">
    <property type="component" value="Chromosome"/>
</dbReference>
<dbReference type="GO" id="GO:0005886">
    <property type="term" value="C:plasma membrane"/>
    <property type="evidence" value="ECO:0007669"/>
    <property type="project" value="UniProtKB-SubCell"/>
</dbReference>
<dbReference type="GO" id="GO:0046872">
    <property type="term" value="F:metal ion binding"/>
    <property type="evidence" value="ECO:0007669"/>
    <property type="project" value="UniProtKB-KW"/>
</dbReference>
<dbReference type="GO" id="GO:0070818">
    <property type="term" value="F:protoporphyrinogen oxidase activity"/>
    <property type="evidence" value="ECO:0007669"/>
    <property type="project" value="UniProtKB-UniRule"/>
</dbReference>
<dbReference type="GO" id="GO:0006782">
    <property type="term" value="P:protoporphyrinogen IX biosynthetic process"/>
    <property type="evidence" value="ECO:0007669"/>
    <property type="project" value="UniProtKB-UniRule"/>
</dbReference>
<dbReference type="HAMAP" id="MF_02239">
    <property type="entry name" value="HemJ"/>
    <property type="match status" value="1"/>
</dbReference>
<dbReference type="InterPro" id="IPR005265">
    <property type="entry name" value="HemJ-like"/>
</dbReference>
<dbReference type="NCBIfam" id="TIGR00701">
    <property type="entry name" value="protoporphyrinogen oxidase HemJ"/>
    <property type="match status" value="1"/>
</dbReference>
<dbReference type="PANTHER" id="PTHR40255:SF1">
    <property type="entry name" value="PROTOPORPHYRINOGEN IX OXIDASE"/>
    <property type="match status" value="1"/>
</dbReference>
<dbReference type="PANTHER" id="PTHR40255">
    <property type="entry name" value="UPF0093 MEMBRANE PROTEIN SLR1790"/>
    <property type="match status" value="1"/>
</dbReference>
<dbReference type="Pfam" id="PF03653">
    <property type="entry name" value="UPF0093"/>
    <property type="match status" value="1"/>
</dbReference>
<dbReference type="PIRSF" id="PIRSF004638">
    <property type="entry name" value="UCP004638"/>
    <property type="match status" value="1"/>
</dbReference>
<feature type="chain" id="PRO_0000217661" description="Protoporphyrinogen IX oxidase">
    <location>
        <begin position="1"/>
        <end position="145"/>
    </location>
</feature>
<feature type="transmembrane region" description="Helical" evidence="2">
    <location>
        <begin position="6"/>
        <end position="26"/>
    </location>
</feature>
<feature type="transmembrane region" description="Helical" evidence="2">
    <location>
        <begin position="61"/>
        <end position="81"/>
    </location>
</feature>
<feature type="transmembrane region" description="Helical" evidence="2">
    <location>
        <begin position="83"/>
        <end position="103"/>
    </location>
</feature>
<feature type="transmembrane region" description="Helical" evidence="2">
    <location>
        <begin position="123"/>
        <end position="143"/>
    </location>
</feature>
<feature type="binding site" description="axial binding residue" evidence="1">
    <location>
        <position position="12"/>
    </location>
    <ligand>
        <name>heme</name>
        <dbReference type="ChEBI" id="CHEBI:30413"/>
    </ligand>
    <ligandPart>
        <name>Fe</name>
        <dbReference type="ChEBI" id="CHEBI:18248"/>
    </ligandPart>
</feature>
<feature type="binding site" description="axial binding residue" evidence="1">
    <location>
        <position position="88"/>
    </location>
    <ligand>
        <name>heme</name>
        <dbReference type="ChEBI" id="CHEBI:30413"/>
    </ligand>
    <ligandPart>
        <name>Fe</name>
        <dbReference type="ChEBI" id="CHEBI:18248"/>
    </ligandPart>
</feature>
<name>HEMJ_RICPR</name>
<accession>Q9ZC85</accession>
<protein>
    <recommendedName>
        <fullName evidence="1">Protoporphyrinogen IX oxidase</fullName>
        <shortName evidence="1">PPO</shortName>
        <ecNumber evidence="1">1.3.99.-</ecNumber>
    </recommendedName>
</protein>
<gene>
    <name type="ordered locus">RP883</name>
</gene>
<sequence>MESYYLWFKSAHLISAICWMAGLLYLPRIYVYHTKAKIGSELDSTLQVMELKLLRFIMNPAMISTFIFGLINAHIYGFVALDTWFQFKMFAVLILVIFHGLLARWRKDFAKGKNVHSKKFYRIVNEIPAICMVIAVIMVIVKPFD</sequence>
<reference key="1">
    <citation type="journal article" date="1998" name="Nature">
        <title>The genome sequence of Rickettsia prowazekii and the origin of mitochondria.</title>
        <authorList>
            <person name="Andersson S.G.E."/>
            <person name="Zomorodipour A."/>
            <person name="Andersson J.O."/>
            <person name="Sicheritz-Ponten T."/>
            <person name="Alsmark U.C.M."/>
            <person name="Podowski R.M."/>
            <person name="Naeslund A.K."/>
            <person name="Eriksson A.-S."/>
            <person name="Winkler H.H."/>
            <person name="Kurland C.G."/>
        </authorList>
    </citation>
    <scope>NUCLEOTIDE SEQUENCE [LARGE SCALE GENOMIC DNA]</scope>
    <source>
        <strain>Madrid E</strain>
    </source>
</reference>